<feature type="chain" id="PRO_0000365091" description="Uncharacterized protein DDB_G0275933">
    <location>
        <begin position="1"/>
        <end position="121"/>
    </location>
</feature>
<feature type="domain" description="CHCH" evidence="1">
    <location>
        <begin position="43"/>
        <end position="86"/>
    </location>
</feature>
<feature type="short sequence motif" description="Cx9C motif 1" evidence="1">
    <location>
        <begin position="46"/>
        <end position="56"/>
    </location>
</feature>
<feature type="short sequence motif" description="Cx9C motif 2" evidence="1">
    <location>
        <begin position="68"/>
        <end position="78"/>
    </location>
</feature>
<feature type="disulfide bond" evidence="1">
    <location>
        <begin position="46"/>
        <end position="78"/>
    </location>
</feature>
<feature type="disulfide bond" evidence="1">
    <location>
        <begin position="56"/>
        <end position="68"/>
    </location>
</feature>
<dbReference type="EMBL" id="AAFI02000013">
    <property type="protein sequence ID" value="EAL69717.1"/>
    <property type="molecule type" value="Genomic_DNA"/>
</dbReference>
<dbReference type="RefSeq" id="XP_643632.1">
    <property type="nucleotide sequence ID" value="XM_638540.1"/>
</dbReference>
<dbReference type="SMR" id="Q552P9"/>
<dbReference type="FunCoup" id="Q552P9">
    <property type="interactions" value="70"/>
</dbReference>
<dbReference type="STRING" id="44689.Q552P9"/>
<dbReference type="PaxDb" id="44689-DDB0217731"/>
<dbReference type="EnsemblProtists" id="EAL69717">
    <property type="protein sequence ID" value="EAL69717"/>
    <property type="gene ID" value="DDB_G0275933"/>
</dbReference>
<dbReference type="GeneID" id="8620219"/>
<dbReference type="KEGG" id="ddi:DDB_G0275933"/>
<dbReference type="dictyBase" id="DDB_G0275933"/>
<dbReference type="VEuPathDB" id="AmoebaDB:DDB_G0275933"/>
<dbReference type="eggNOG" id="ENOG502RI4J">
    <property type="taxonomic scope" value="Eukaryota"/>
</dbReference>
<dbReference type="HOGENOM" id="CLU_2042432_0_0_1"/>
<dbReference type="InParanoid" id="Q552P9"/>
<dbReference type="OMA" id="VIWECKE"/>
<dbReference type="PhylomeDB" id="Q552P9"/>
<dbReference type="PRO" id="PR:Q552P9"/>
<dbReference type="Proteomes" id="UP000002195">
    <property type="component" value="Chromosome 2"/>
</dbReference>
<dbReference type="GO" id="GO:0005739">
    <property type="term" value="C:mitochondrion"/>
    <property type="evidence" value="ECO:0000318"/>
    <property type="project" value="GO_Central"/>
</dbReference>
<dbReference type="InterPro" id="IPR013892">
    <property type="entry name" value="Cyt_c_biogenesis_Cmc1-like"/>
</dbReference>
<dbReference type="PANTHER" id="PTHR22977">
    <property type="entry name" value="COX ASSEMBLY MITOCHONDRIAL PROTEIN"/>
    <property type="match status" value="1"/>
</dbReference>
<dbReference type="PANTHER" id="PTHR22977:SF5">
    <property type="entry name" value="COX ASSEMBLY MITOCHONDRIAL PROTEIN HOMOLOG"/>
    <property type="match status" value="1"/>
</dbReference>
<dbReference type="Pfam" id="PF08583">
    <property type="entry name" value="Cmc1"/>
    <property type="match status" value="1"/>
</dbReference>
<dbReference type="PROSITE" id="PS51808">
    <property type="entry name" value="CHCH"/>
    <property type="match status" value="1"/>
</dbReference>
<reference key="1">
    <citation type="journal article" date="2002" name="Nature">
        <title>Sequence and analysis of chromosome 2 of Dictyostelium discoideum.</title>
        <authorList>
            <person name="Gloeckner G."/>
            <person name="Eichinger L."/>
            <person name="Szafranski K."/>
            <person name="Pachebat J.A."/>
            <person name="Bankier A.T."/>
            <person name="Dear P.H."/>
            <person name="Lehmann R."/>
            <person name="Baumgart C."/>
            <person name="Parra G."/>
            <person name="Abril J.F."/>
            <person name="Guigo R."/>
            <person name="Kumpf K."/>
            <person name="Tunggal B."/>
            <person name="Cox E.C."/>
            <person name="Quail M.A."/>
            <person name="Platzer M."/>
            <person name="Rosenthal A."/>
            <person name="Noegel A.A."/>
        </authorList>
    </citation>
    <scope>NUCLEOTIDE SEQUENCE [LARGE SCALE GENOMIC DNA]</scope>
    <source>
        <strain>AX4</strain>
    </source>
</reference>
<reference key="2">
    <citation type="journal article" date="2005" name="Nature">
        <title>The genome of the social amoeba Dictyostelium discoideum.</title>
        <authorList>
            <person name="Eichinger L."/>
            <person name="Pachebat J.A."/>
            <person name="Gloeckner G."/>
            <person name="Rajandream M.A."/>
            <person name="Sucgang R."/>
            <person name="Berriman M."/>
            <person name="Song J."/>
            <person name="Olsen R."/>
            <person name="Szafranski K."/>
            <person name="Xu Q."/>
            <person name="Tunggal B."/>
            <person name="Kummerfeld S."/>
            <person name="Madera M."/>
            <person name="Konfortov B.A."/>
            <person name="Rivero F."/>
            <person name="Bankier A.T."/>
            <person name="Lehmann R."/>
            <person name="Hamlin N."/>
            <person name="Davies R."/>
            <person name="Gaudet P."/>
            <person name="Fey P."/>
            <person name="Pilcher K."/>
            <person name="Chen G."/>
            <person name="Saunders D."/>
            <person name="Sodergren E.J."/>
            <person name="Davis P."/>
            <person name="Kerhornou A."/>
            <person name="Nie X."/>
            <person name="Hall N."/>
            <person name="Anjard C."/>
            <person name="Hemphill L."/>
            <person name="Bason N."/>
            <person name="Farbrother P."/>
            <person name="Desany B."/>
            <person name="Just E."/>
            <person name="Morio T."/>
            <person name="Rost R."/>
            <person name="Churcher C.M."/>
            <person name="Cooper J."/>
            <person name="Haydock S."/>
            <person name="van Driessche N."/>
            <person name="Cronin A."/>
            <person name="Goodhead I."/>
            <person name="Muzny D.M."/>
            <person name="Mourier T."/>
            <person name="Pain A."/>
            <person name="Lu M."/>
            <person name="Harper D."/>
            <person name="Lindsay R."/>
            <person name="Hauser H."/>
            <person name="James K.D."/>
            <person name="Quiles M."/>
            <person name="Madan Babu M."/>
            <person name="Saito T."/>
            <person name="Buchrieser C."/>
            <person name="Wardroper A."/>
            <person name="Felder M."/>
            <person name="Thangavelu M."/>
            <person name="Johnson D."/>
            <person name="Knights A."/>
            <person name="Loulseged H."/>
            <person name="Mungall K.L."/>
            <person name="Oliver K."/>
            <person name="Price C."/>
            <person name="Quail M.A."/>
            <person name="Urushihara H."/>
            <person name="Hernandez J."/>
            <person name="Rabbinowitsch E."/>
            <person name="Steffen D."/>
            <person name="Sanders M."/>
            <person name="Ma J."/>
            <person name="Kohara Y."/>
            <person name="Sharp S."/>
            <person name="Simmonds M.N."/>
            <person name="Spiegler S."/>
            <person name="Tivey A."/>
            <person name="Sugano S."/>
            <person name="White B."/>
            <person name="Walker D."/>
            <person name="Woodward J.R."/>
            <person name="Winckler T."/>
            <person name="Tanaka Y."/>
            <person name="Shaulsky G."/>
            <person name="Schleicher M."/>
            <person name="Weinstock G.M."/>
            <person name="Rosenthal A."/>
            <person name="Cox E.C."/>
            <person name="Chisholm R.L."/>
            <person name="Gibbs R.A."/>
            <person name="Loomis W.F."/>
            <person name="Platzer M."/>
            <person name="Kay R.R."/>
            <person name="Williams J.G."/>
            <person name="Dear P.H."/>
            <person name="Noegel A.A."/>
            <person name="Barrell B.G."/>
            <person name="Kuspa A."/>
        </authorList>
    </citation>
    <scope>NUCLEOTIDE SEQUENCE [LARGE SCALE GENOMIC DNA]</scope>
    <source>
        <strain>AX4</strain>
    </source>
</reference>
<name>Y5933_DICDI</name>
<sequence length="121" mass="14170">MSKPRQSTLDPEDKKYLEIPDSEVVLPAAVDSYLRQKLKDQSLKECSSHVAAFADCSKDKYISVVWECRELQQLMKNCLVEYTTSERLIGMKREWVDASKKRIYEKRLQKELESKEPTPKK</sequence>
<proteinExistence type="inferred from homology"/>
<accession>Q552P9</accession>
<accession>Q75K26</accession>
<gene>
    <name type="ORF">DDB_G0275933</name>
</gene>
<protein>
    <recommendedName>
        <fullName>Uncharacterized protein DDB_G0275933</fullName>
    </recommendedName>
</protein>
<keyword id="KW-1015">Disulfide bond</keyword>
<keyword id="KW-1185">Reference proteome</keyword>
<comment type="similarity">
    <text evidence="2">Belongs to the CMC family.</text>
</comment>
<evidence type="ECO:0000255" key="1">
    <source>
        <dbReference type="PROSITE-ProRule" id="PRU01150"/>
    </source>
</evidence>
<evidence type="ECO:0000305" key="2"/>
<organism>
    <name type="scientific">Dictyostelium discoideum</name>
    <name type="common">Social amoeba</name>
    <dbReference type="NCBI Taxonomy" id="44689"/>
    <lineage>
        <taxon>Eukaryota</taxon>
        <taxon>Amoebozoa</taxon>
        <taxon>Evosea</taxon>
        <taxon>Eumycetozoa</taxon>
        <taxon>Dictyostelia</taxon>
        <taxon>Dictyosteliales</taxon>
        <taxon>Dictyosteliaceae</taxon>
        <taxon>Dictyostelium</taxon>
    </lineage>
</organism>